<organism>
    <name type="scientific">Escherichia coli (strain SE11)</name>
    <dbReference type="NCBI Taxonomy" id="409438"/>
    <lineage>
        <taxon>Bacteria</taxon>
        <taxon>Pseudomonadati</taxon>
        <taxon>Pseudomonadota</taxon>
        <taxon>Gammaproteobacteria</taxon>
        <taxon>Enterobacterales</taxon>
        <taxon>Enterobacteriaceae</taxon>
        <taxon>Escherichia</taxon>
    </lineage>
</organism>
<evidence type="ECO:0000255" key="1">
    <source>
        <dbReference type="HAMAP-Rule" id="MF_01224"/>
    </source>
</evidence>
<keyword id="KW-0456">Lyase</keyword>
<keyword id="KW-0501">Molybdenum cofactor biosynthesis</keyword>
<comment type="function">
    <text evidence="1">Catalyzes the conversion of (8S)-3',8-cyclo-7,8-dihydroguanosine 5'-triphosphate to cyclic pyranopterin monophosphate (cPMP).</text>
</comment>
<comment type="catalytic activity">
    <reaction evidence="1">
        <text>(8S)-3',8-cyclo-7,8-dihydroguanosine 5'-triphosphate = cyclic pyranopterin phosphate + diphosphate</text>
        <dbReference type="Rhea" id="RHEA:49580"/>
        <dbReference type="ChEBI" id="CHEBI:33019"/>
        <dbReference type="ChEBI" id="CHEBI:59648"/>
        <dbReference type="ChEBI" id="CHEBI:131766"/>
        <dbReference type="EC" id="4.6.1.17"/>
    </reaction>
</comment>
<comment type="pathway">
    <text evidence="1">Cofactor biosynthesis; molybdopterin biosynthesis.</text>
</comment>
<comment type="subunit">
    <text evidence="1">Homohexamer; trimer of dimers.</text>
</comment>
<comment type="similarity">
    <text evidence="1">Belongs to the MoaC family.</text>
</comment>
<sequence length="161" mass="17467">MSQLTHINAAGEAHMVDVSAKAETVREARAEAFVTMRSETLAMIIDGRHHKGDVFATARIAGIQAAKRTWDLIPLCHPLMLSKVEVNLQAEPEHNRVRIETLCRLTGKTGVEMEALTAASVAALTIYDMCKAVQKDMVIGPVRLLAKSGGKSGDFKVEADD</sequence>
<reference key="1">
    <citation type="journal article" date="2008" name="DNA Res.">
        <title>Complete genome sequence and comparative analysis of the wild-type commensal Escherichia coli strain SE11 isolated from a healthy adult.</title>
        <authorList>
            <person name="Oshima K."/>
            <person name="Toh H."/>
            <person name="Ogura Y."/>
            <person name="Sasamoto H."/>
            <person name="Morita H."/>
            <person name="Park S.-H."/>
            <person name="Ooka T."/>
            <person name="Iyoda S."/>
            <person name="Taylor T.D."/>
            <person name="Hayashi T."/>
            <person name="Itoh K."/>
            <person name="Hattori M."/>
        </authorList>
    </citation>
    <scope>NUCLEOTIDE SEQUENCE [LARGE SCALE GENOMIC DNA]</scope>
    <source>
        <strain>SE11</strain>
    </source>
</reference>
<gene>
    <name evidence="1" type="primary">moaC</name>
    <name type="ordered locus">ECSE_0837</name>
</gene>
<protein>
    <recommendedName>
        <fullName evidence="1">Cyclic pyranopterin monophosphate synthase</fullName>
        <ecNumber evidence="1">4.6.1.17</ecNumber>
    </recommendedName>
    <alternativeName>
        <fullName evidence="1">Molybdenum cofactor biosynthesis protein C</fullName>
    </alternativeName>
</protein>
<dbReference type="EC" id="4.6.1.17" evidence="1"/>
<dbReference type="EMBL" id="AP009240">
    <property type="protein sequence ID" value="BAG76361.1"/>
    <property type="molecule type" value="Genomic_DNA"/>
</dbReference>
<dbReference type="RefSeq" id="WP_000080885.1">
    <property type="nucleotide sequence ID" value="NC_011415.1"/>
</dbReference>
<dbReference type="SMR" id="B6I7T8"/>
<dbReference type="GeneID" id="86945666"/>
<dbReference type="KEGG" id="ecy:ECSE_0837"/>
<dbReference type="HOGENOM" id="CLU_074693_1_1_6"/>
<dbReference type="UniPathway" id="UPA00344"/>
<dbReference type="Proteomes" id="UP000008199">
    <property type="component" value="Chromosome"/>
</dbReference>
<dbReference type="GO" id="GO:0061799">
    <property type="term" value="F:cyclic pyranopterin monophosphate synthase activity"/>
    <property type="evidence" value="ECO:0007669"/>
    <property type="project" value="UniProtKB-UniRule"/>
</dbReference>
<dbReference type="GO" id="GO:0006777">
    <property type="term" value="P:Mo-molybdopterin cofactor biosynthetic process"/>
    <property type="evidence" value="ECO:0007669"/>
    <property type="project" value="UniProtKB-UniRule"/>
</dbReference>
<dbReference type="CDD" id="cd01420">
    <property type="entry name" value="MoaC_PE"/>
    <property type="match status" value="1"/>
</dbReference>
<dbReference type="FunFam" id="3.30.70.640:FF:000001">
    <property type="entry name" value="Cyclic pyranopterin monophosphate synthase"/>
    <property type="match status" value="1"/>
</dbReference>
<dbReference type="Gene3D" id="3.30.70.640">
    <property type="entry name" value="Molybdopterin cofactor biosynthesis C (MoaC) domain"/>
    <property type="match status" value="1"/>
</dbReference>
<dbReference type="HAMAP" id="MF_01224_B">
    <property type="entry name" value="MoaC_B"/>
    <property type="match status" value="1"/>
</dbReference>
<dbReference type="InterPro" id="IPR023045">
    <property type="entry name" value="MoaC"/>
</dbReference>
<dbReference type="InterPro" id="IPR047594">
    <property type="entry name" value="MoaC_bact/euk"/>
</dbReference>
<dbReference type="InterPro" id="IPR036522">
    <property type="entry name" value="MoaC_sf"/>
</dbReference>
<dbReference type="InterPro" id="IPR050105">
    <property type="entry name" value="MoCo_biosynth_MoaA/MoaC"/>
</dbReference>
<dbReference type="InterPro" id="IPR002820">
    <property type="entry name" value="Mopterin_CF_biosynth-C_dom"/>
</dbReference>
<dbReference type="NCBIfam" id="TIGR00581">
    <property type="entry name" value="moaC"/>
    <property type="match status" value="1"/>
</dbReference>
<dbReference type="NCBIfam" id="NF006870">
    <property type="entry name" value="PRK09364.1"/>
    <property type="match status" value="1"/>
</dbReference>
<dbReference type="PANTHER" id="PTHR22960">
    <property type="entry name" value="MOLYBDOPTERIN COFACTOR SYNTHESIS PROTEIN A"/>
    <property type="match status" value="1"/>
</dbReference>
<dbReference type="Pfam" id="PF01967">
    <property type="entry name" value="MoaC"/>
    <property type="match status" value="1"/>
</dbReference>
<dbReference type="SUPFAM" id="SSF55040">
    <property type="entry name" value="Molybdenum cofactor biosynthesis protein C, MoaC"/>
    <property type="match status" value="1"/>
</dbReference>
<name>MOAC_ECOSE</name>
<feature type="chain" id="PRO_1000139266" description="Cyclic pyranopterin monophosphate synthase">
    <location>
        <begin position="1"/>
        <end position="161"/>
    </location>
</feature>
<feature type="active site" evidence="1">
    <location>
        <position position="128"/>
    </location>
</feature>
<feature type="binding site" evidence="1">
    <location>
        <begin position="75"/>
        <end position="77"/>
    </location>
    <ligand>
        <name>substrate</name>
    </ligand>
</feature>
<feature type="binding site" evidence="1">
    <location>
        <begin position="113"/>
        <end position="114"/>
    </location>
    <ligand>
        <name>substrate</name>
    </ligand>
</feature>
<accession>B6I7T8</accession>
<proteinExistence type="inferred from homology"/>